<reference key="1">
    <citation type="journal article" date="2005" name="Nature">
        <title>Genome sequencing and analysis of Aspergillus oryzae.</title>
        <authorList>
            <person name="Machida M."/>
            <person name="Asai K."/>
            <person name="Sano M."/>
            <person name="Tanaka T."/>
            <person name="Kumagai T."/>
            <person name="Terai G."/>
            <person name="Kusumoto K."/>
            <person name="Arima T."/>
            <person name="Akita O."/>
            <person name="Kashiwagi Y."/>
            <person name="Abe K."/>
            <person name="Gomi K."/>
            <person name="Horiuchi H."/>
            <person name="Kitamoto K."/>
            <person name="Kobayashi T."/>
            <person name="Takeuchi M."/>
            <person name="Denning D.W."/>
            <person name="Galagan J.E."/>
            <person name="Nierman W.C."/>
            <person name="Yu J."/>
            <person name="Archer D.B."/>
            <person name="Bennett J.W."/>
            <person name="Bhatnagar D."/>
            <person name="Cleveland T.E."/>
            <person name="Fedorova N.D."/>
            <person name="Gotoh O."/>
            <person name="Horikawa H."/>
            <person name="Hosoyama A."/>
            <person name="Ichinomiya M."/>
            <person name="Igarashi R."/>
            <person name="Iwashita K."/>
            <person name="Juvvadi P.R."/>
            <person name="Kato M."/>
            <person name="Kato Y."/>
            <person name="Kin T."/>
            <person name="Kokubun A."/>
            <person name="Maeda H."/>
            <person name="Maeyama N."/>
            <person name="Maruyama J."/>
            <person name="Nagasaki H."/>
            <person name="Nakajima T."/>
            <person name="Oda K."/>
            <person name="Okada K."/>
            <person name="Paulsen I."/>
            <person name="Sakamoto K."/>
            <person name="Sawano T."/>
            <person name="Takahashi M."/>
            <person name="Takase K."/>
            <person name="Terabayashi Y."/>
            <person name="Wortman J.R."/>
            <person name="Yamada O."/>
            <person name="Yamagata Y."/>
            <person name="Anazawa H."/>
            <person name="Hata Y."/>
            <person name="Koide Y."/>
            <person name="Komori T."/>
            <person name="Koyama Y."/>
            <person name="Minetoki T."/>
            <person name="Suharnan S."/>
            <person name="Tanaka A."/>
            <person name="Isono K."/>
            <person name="Kuhara S."/>
            <person name="Ogasawara N."/>
            <person name="Kikuchi H."/>
        </authorList>
    </citation>
    <scope>NUCLEOTIDE SEQUENCE [LARGE SCALE GENOMIC DNA]</scope>
    <source>
        <strain>ATCC 42149 / RIB 40</strain>
    </source>
</reference>
<reference key="2">
    <citation type="journal article" date="2012" name="ChemBioChem">
        <title>Overexpressing transcriptional regulator in Aspergillus oryzae activates a silent biosynthetic pathway to produce a novel polyketide.</title>
        <authorList>
            <person name="Nakazawa T."/>
            <person name="Ishiuchi K."/>
            <person name="Praseuth A."/>
            <person name="Noguchi H."/>
            <person name="Hotta K."/>
            <person name="Watanabe K."/>
        </authorList>
    </citation>
    <scope>FUNCTION</scope>
</reference>
<proteinExistence type="inferred from homology"/>
<protein>
    <recommendedName>
        <fullName evidence="4">Zn(2)-C6 fungal-type trascription factor aoiH</fullName>
    </recommendedName>
</protein>
<feature type="chain" id="PRO_0000462121" description="Zn(2)-C6 fungal-type trascription factor aoiH">
    <location>
        <begin position="1"/>
        <end position="387"/>
    </location>
</feature>
<feature type="DNA-binding region" description="Zn(2)-C6 fungal-type" evidence="1">
    <location>
        <begin position="21"/>
        <end position="48"/>
    </location>
</feature>
<feature type="region of interest" description="Disordered" evidence="2">
    <location>
        <begin position="68"/>
        <end position="94"/>
    </location>
</feature>
<feature type="compositionally biased region" description="Polar residues" evidence="2">
    <location>
        <begin position="68"/>
        <end position="87"/>
    </location>
</feature>
<name>AOIH_ASPOR</name>
<organism>
    <name type="scientific">Aspergillus oryzae (strain ATCC 42149 / RIB 40)</name>
    <name type="common">Yellow koji mold</name>
    <dbReference type="NCBI Taxonomy" id="510516"/>
    <lineage>
        <taxon>Eukaryota</taxon>
        <taxon>Fungi</taxon>
        <taxon>Dikarya</taxon>
        <taxon>Ascomycota</taxon>
        <taxon>Pezizomycotina</taxon>
        <taxon>Eurotiomycetes</taxon>
        <taxon>Eurotiomycetidae</taxon>
        <taxon>Eurotiales</taxon>
        <taxon>Aspergillaceae</taxon>
        <taxon>Aspergillus</taxon>
        <taxon>Aspergillus subgen. Circumdati</taxon>
    </lineage>
</organism>
<dbReference type="EMBL" id="AP007175">
    <property type="protein sequence ID" value="BAE65966.1"/>
    <property type="molecule type" value="Genomic_DNA"/>
</dbReference>
<dbReference type="STRING" id="510516.Q2TXQ7"/>
<dbReference type="EnsemblFungi" id="BAE65966">
    <property type="protein sequence ID" value="BAE65966"/>
    <property type="gene ID" value="AO090010000049"/>
</dbReference>
<dbReference type="VEuPathDB" id="FungiDB:AO090010000049"/>
<dbReference type="HOGENOM" id="CLU_051725_0_0_1"/>
<dbReference type="OMA" id="SECANIG"/>
<dbReference type="OrthoDB" id="2211763at2759"/>
<dbReference type="Proteomes" id="UP000006564">
    <property type="component" value="Chromosome 8"/>
</dbReference>
<dbReference type="GO" id="GO:0005634">
    <property type="term" value="C:nucleus"/>
    <property type="evidence" value="ECO:0007669"/>
    <property type="project" value="UniProtKB-SubCell"/>
</dbReference>
<dbReference type="GO" id="GO:0003677">
    <property type="term" value="F:DNA binding"/>
    <property type="evidence" value="ECO:0007669"/>
    <property type="project" value="UniProtKB-KW"/>
</dbReference>
<dbReference type="GO" id="GO:0000981">
    <property type="term" value="F:DNA-binding transcription factor activity, RNA polymerase II-specific"/>
    <property type="evidence" value="ECO:0007669"/>
    <property type="project" value="InterPro"/>
</dbReference>
<dbReference type="GO" id="GO:0008270">
    <property type="term" value="F:zinc ion binding"/>
    <property type="evidence" value="ECO:0007669"/>
    <property type="project" value="InterPro"/>
</dbReference>
<dbReference type="GO" id="GO:0045122">
    <property type="term" value="P:aflatoxin biosynthetic process"/>
    <property type="evidence" value="ECO:0007669"/>
    <property type="project" value="InterPro"/>
</dbReference>
<dbReference type="GO" id="GO:0030639">
    <property type="term" value="P:polyketide biosynthetic process"/>
    <property type="evidence" value="ECO:0000317"/>
    <property type="project" value="AspGD"/>
</dbReference>
<dbReference type="GO" id="GO:1900378">
    <property type="term" value="P:positive regulation of secondary metabolite biosynthetic process"/>
    <property type="evidence" value="ECO:0000315"/>
    <property type="project" value="AspGD"/>
</dbReference>
<dbReference type="CDD" id="cd00067">
    <property type="entry name" value="GAL4"/>
    <property type="match status" value="1"/>
</dbReference>
<dbReference type="Gene3D" id="4.10.240.10">
    <property type="entry name" value="Zn(2)-C6 fungal-type DNA-binding domain"/>
    <property type="match status" value="1"/>
</dbReference>
<dbReference type="InterPro" id="IPR013700">
    <property type="entry name" value="AflR"/>
</dbReference>
<dbReference type="InterPro" id="IPR050675">
    <property type="entry name" value="OAF3"/>
</dbReference>
<dbReference type="InterPro" id="IPR036864">
    <property type="entry name" value="Zn2-C6_fun-type_DNA-bd_sf"/>
</dbReference>
<dbReference type="InterPro" id="IPR001138">
    <property type="entry name" value="Zn2Cys6_DnaBD"/>
</dbReference>
<dbReference type="PANTHER" id="PTHR31069:SF31">
    <property type="entry name" value="MONODICTYPHENONE CLUSTER TRANSCRIPTION FACTOR-RELATED"/>
    <property type="match status" value="1"/>
</dbReference>
<dbReference type="PANTHER" id="PTHR31069">
    <property type="entry name" value="OLEATE-ACTIVATED TRANSCRIPTION FACTOR 1-RELATED"/>
    <property type="match status" value="1"/>
</dbReference>
<dbReference type="Pfam" id="PF08493">
    <property type="entry name" value="AflR"/>
    <property type="match status" value="1"/>
</dbReference>
<dbReference type="Pfam" id="PF00172">
    <property type="entry name" value="Zn_clus"/>
    <property type="match status" value="1"/>
</dbReference>
<dbReference type="PRINTS" id="PR00755">
    <property type="entry name" value="AFLATOXINBRP"/>
</dbReference>
<dbReference type="SMART" id="SM00066">
    <property type="entry name" value="GAL4"/>
    <property type="match status" value="1"/>
</dbReference>
<dbReference type="SUPFAM" id="SSF57701">
    <property type="entry name" value="Zn2/Cys6 DNA-binding domain"/>
    <property type="match status" value="1"/>
</dbReference>
<dbReference type="PROSITE" id="PS00463">
    <property type="entry name" value="ZN2_CY6_FUNGAL_1"/>
    <property type="match status" value="1"/>
</dbReference>
<dbReference type="PROSITE" id="PS50048">
    <property type="entry name" value="ZN2_CY6_FUNGAL_2"/>
    <property type="match status" value="1"/>
</dbReference>
<accession>Q2TXQ7</accession>
<evidence type="ECO:0000255" key="1">
    <source>
        <dbReference type="PROSITE-ProRule" id="PRU00227"/>
    </source>
</evidence>
<evidence type="ECO:0000256" key="2">
    <source>
        <dbReference type="SAM" id="MobiDB-lite"/>
    </source>
</evidence>
<evidence type="ECO:0000269" key="3">
    <source>
    </source>
</evidence>
<evidence type="ECO:0000303" key="4">
    <source>
    </source>
</evidence>
<sequence length="387" mass="42667">MSTGSTLNQRSGKPVKLRASCDFCALSKVKCDRGQPQCVRCIKSGIDCNYSESRRIGKAWHHCAPSAVRSTSATTQGTRRKQQTIAQHSPRRRIHRDTQALSAADDAMSPYDPSGYATPFSMFHTLPSPVPESTIRSQTHIESYPSLDGTMAPILCSPESADISLPDIPHVAQLRTNELEGESPSVLQYNPSWDRIMAEHSTAIGDAGDCITRAAAVLKSVRDPRTSCVRSRTPPRSHTQSLDATLDDGRTAMDTVKDILACPCAQEIRVALLLVLIIQQVLESYQALLTQQHDTPREESPLGINLSRYDTPMAIGRYLLDNELRSKIIVQVLSSELEKIGLILDILTRHAQSMAHQPDELILGTYIDSLQTTKKEVLESLEQGNDI</sequence>
<keyword id="KW-0238">DNA-binding</keyword>
<keyword id="KW-0479">Metal-binding</keyword>
<keyword id="KW-0539">Nucleus</keyword>
<keyword id="KW-1185">Reference proteome</keyword>
<keyword id="KW-0804">Transcription</keyword>
<keyword id="KW-0805">Transcription regulation</keyword>
<keyword id="KW-0862">Zinc</keyword>
<comment type="function">
    <text evidence="3">Transcription factor; part of the gene cluster that mediates the biosynthesis of a methylated derivative of known natural products orthosporin and diaporthin (PubMed:22447538). Positively regultaes the expression of the non-reducing polyketide synthase aoiG and the O-methyltransferase aoiO (PubMed:22447538).</text>
</comment>
<comment type="subcellular location">
    <subcellularLocation>
        <location evidence="1">Nucleus</location>
    </subcellularLocation>
</comment>
<gene>
    <name evidence="4" type="primary">aoiH</name>
    <name type="ORF">AO090010000049</name>
</gene>